<proteinExistence type="evidence at protein level"/>
<feature type="chain" id="PRO_0000084542" description="205 kDa microtubule-associated protein">
    <location>
        <begin position="1"/>
        <end position="1185"/>
    </location>
</feature>
<feature type="region of interest" description="Disordered" evidence="2">
    <location>
        <begin position="146"/>
        <end position="196"/>
    </location>
</feature>
<feature type="region of interest" description="Microtubule-binding" evidence="1">
    <location>
        <begin position="745"/>
        <end position="977"/>
    </location>
</feature>
<feature type="region of interest" description="Disordered" evidence="2">
    <location>
        <begin position="856"/>
        <end position="1035"/>
    </location>
</feature>
<feature type="region of interest" description="Disordered" evidence="2">
    <location>
        <begin position="1054"/>
        <end position="1114"/>
    </location>
</feature>
<feature type="compositionally biased region" description="Low complexity" evidence="2">
    <location>
        <begin position="146"/>
        <end position="159"/>
    </location>
</feature>
<feature type="compositionally biased region" description="Polar residues" evidence="2">
    <location>
        <begin position="179"/>
        <end position="196"/>
    </location>
</feature>
<feature type="compositionally biased region" description="Low complexity" evidence="2">
    <location>
        <begin position="856"/>
        <end position="866"/>
    </location>
</feature>
<feature type="compositionally biased region" description="Polar residues" evidence="2">
    <location>
        <begin position="867"/>
        <end position="881"/>
    </location>
</feature>
<feature type="compositionally biased region" description="Polar residues" evidence="2">
    <location>
        <begin position="908"/>
        <end position="936"/>
    </location>
</feature>
<feature type="compositionally biased region" description="Low complexity" evidence="2">
    <location>
        <begin position="940"/>
        <end position="952"/>
    </location>
</feature>
<feature type="compositionally biased region" description="Polar residues" evidence="2">
    <location>
        <begin position="989"/>
        <end position="999"/>
    </location>
</feature>
<feature type="compositionally biased region" description="Low complexity" evidence="2">
    <location>
        <begin position="1003"/>
        <end position="1015"/>
    </location>
</feature>
<feature type="compositionally biased region" description="Polar residues" evidence="2">
    <location>
        <begin position="1016"/>
        <end position="1026"/>
    </location>
</feature>
<feature type="compositionally biased region" description="Polar residues" evidence="2">
    <location>
        <begin position="1054"/>
        <end position="1066"/>
    </location>
</feature>
<feature type="compositionally biased region" description="Polar residues" evidence="2">
    <location>
        <begin position="1100"/>
        <end position="1111"/>
    </location>
</feature>
<feature type="modified residue" description="Phosphoserine" evidence="3">
    <location>
        <position position="354"/>
    </location>
</feature>
<feature type="modified residue" description="Phosphoserine" evidence="4">
    <location>
        <position position="448"/>
    </location>
</feature>
<feature type="modified residue" description="Phosphotyrosine" evidence="4">
    <location>
        <position position="450"/>
    </location>
</feature>
<feature type="modified residue" description="Phosphoserine" evidence="4">
    <location>
        <position position="709"/>
    </location>
</feature>
<feature type="modified residue" description="Phosphoserine" evidence="4">
    <location>
        <position position="710"/>
    </location>
</feature>
<feature type="modified residue" description="Phosphoserine" evidence="4">
    <location>
        <position position="712"/>
    </location>
</feature>
<feature type="modified residue" description="Phosphothreonine" evidence="3">
    <location>
        <position position="721"/>
    </location>
</feature>
<feature type="modified residue" description="Phosphoserine" evidence="3">
    <location>
        <position position="728"/>
    </location>
</feature>
<feature type="modified residue" description="Phosphoserine" evidence="4">
    <location>
        <position position="874"/>
    </location>
</feature>
<feature type="modified residue" description="Phosphoserine" evidence="3">
    <location>
        <position position="1075"/>
    </location>
</feature>
<feature type="modified residue" description="Phosphoserine" evidence="4">
    <location>
        <position position="1086"/>
    </location>
</feature>
<feature type="modified residue" description="Phosphoserine" evidence="3">
    <location>
        <position position="1121"/>
    </location>
</feature>
<feature type="splice variant" id="VSP_004319" description="In isoform B3 and isoform C2." evidence="5 6">
    <location>
        <begin position="557"/>
        <end position="578"/>
    </location>
</feature>
<feature type="splice variant" id="VSP_004320" description="In isoform C2." evidence="7">
    <location>
        <begin position="650"/>
        <end position="703"/>
    </location>
</feature>
<feature type="splice variant" id="VSP_004321" description="In isoform C2." evidence="7">
    <original>D</original>
    <variation>N</variation>
    <location>
        <position position="704"/>
    </location>
</feature>
<feature type="strand" evidence="8">
    <location>
        <begin position="280"/>
        <end position="282"/>
    </location>
</feature>
<feature type="turn" evidence="8">
    <location>
        <begin position="286"/>
        <end position="288"/>
    </location>
</feature>
<feature type="strand" evidence="8">
    <location>
        <begin position="293"/>
        <end position="295"/>
    </location>
</feature>
<feature type="helix" evidence="8">
    <location>
        <begin position="301"/>
        <end position="309"/>
    </location>
</feature>
<gene>
    <name type="primary">Map205</name>
    <name type="ORF">CG1483</name>
</gene>
<keyword id="KW-0002">3D-structure</keyword>
<keyword id="KW-0025">Alternative splicing</keyword>
<keyword id="KW-0963">Cytoplasm</keyword>
<keyword id="KW-0206">Cytoskeleton</keyword>
<keyword id="KW-0493">Microtubule</keyword>
<keyword id="KW-0597">Phosphoprotein</keyword>
<keyword id="KW-1185">Reference proteome</keyword>
<evidence type="ECO:0000255" key="1"/>
<evidence type="ECO:0000256" key="2">
    <source>
        <dbReference type="SAM" id="MobiDB-lite"/>
    </source>
</evidence>
<evidence type="ECO:0000269" key="3">
    <source>
    </source>
</evidence>
<evidence type="ECO:0000269" key="4">
    <source>
    </source>
</evidence>
<evidence type="ECO:0000303" key="5">
    <source>
    </source>
</evidence>
<evidence type="ECO:0000303" key="6">
    <source ref="4"/>
</evidence>
<evidence type="ECO:0000305" key="7"/>
<evidence type="ECO:0007829" key="8">
    <source>
        <dbReference type="PDB" id="4J7B"/>
    </source>
</evidence>
<name>MA205_DROME</name>
<protein>
    <recommendedName>
        <fullName>205 kDa microtubule-associated protein</fullName>
    </recommendedName>
</protein>
<accession>P23226</accession>
<accession>Q53YG1</accession>
<accession>Q9V9S1</accession>
<comment type="function">
    <text>May play an important role in the regulation of microtubule assembly and interaction.</text>
</comment>
<comment type="interaction">
    <interactant intactId="EBI-239813">
        <id>P23226</id>
    </interactant>
    <interactant intactId="EBI-16066720">
        <id>Q4KMI8</id>
        <label>plk1</label>
    </interactant>
    <organismsDiffer>true</organismsDiffer>
    <experiments>2</experiments>
</comment>
<comment type="subcellular location">
    <subcellularLocation>
        <location>Cytoplasm</location>
        <location>Cytoskeleton</location>
    </subcellularLocation>
    <subcellularLocation>
        <location>Cytoplasm</location>
        <location>Cytoskeleton</location>
        <location>Spindle</location>
    </subcellularLocation>
    <text>Associated with cytoplasmic microtubules and with the mitotic spindle.</text>
</comment>
<comment type="alternative products">
    <event type="alternative splicing"/>
    <isoform>
        <id>P23226-1</id>
        <name>J5</name>
        <sequence type="displayed"/>
    </isoform>
    <isoform>
        <id>P23226-2</id>
        <name>C2</name>
        <sequence type="described" ref="VSP_004319 VSP_004320 VSP_004321"/>
    </isoform>
    <isoform>
        <id>P23226-3</id>
        <name>B3</name>
        <name>A</name>
        <sequence type="described" ref="VSP_004319"/>
    </isoform>
</comment>
<comment type="miscellaneous">
    <text>Phosphorylation of various serine residues may play a regulatory role. The basic domain contains numerous sequences that match known consensus sequences of several different protein kinases.</text>
</comment>
<reference key="1">
    <citation type="journal article" date="1990" name="J. Cell Biol.">
        <title>Analysis of the primary sequence and microtubule-binding region of the Drosophila 205K MAP.</title>
        <authorList>
            <person name="Irminger-Finger I."/>
            <person name="Laymon R.A."/>
            <person name="Goldstein L.S.B."/>
        </authorList>
    </citation>
    <scope>NUCLEOTIDE SEQUENCE [MRNA] (ISOFORM B3)</scope>
    <source>
        <tissue>Embryo</tissue>
    </source>
</reference>
<reference key="2">
    <citation type="journal article" date="2000" name="Science">
        <title>The genome sequence of Drosophila melanogaster.</title>
        <authorList>
            <person name="Adams M.D."/>
            <person name="Celniker S.E."/>
            <person name="Holt R.A."/>
            <person name="Evans C.A."/>
            <person name="Gocayne J.D."/>
            <person name="Amanatides P.G."/>
            <person name="Scherer S.E."/>
            <person name="Li P.W."/>
            <person name="Hoskins R.A."/>
            <person name="Galle R.F."/>
            <person name="George R.A."/>
            <person name="Lewis S.E."/>
            <person name="Richards S."/>
            <person name="Ashburner M."/>
            <person name="Henderson S.N."/>
            <person name="Sutton G.G."/>
            <person name="Wortman J.R."/>
            <person name="Yandell M.D."/>
            <person name="Zhang Q."/>
            <person name="Chen L.X."/>
            <person name="Brandon R.C."/>
            <person name="Rogers Y.-H.C."/>
            <person name="Blazej R.G."/>
            <person name="Champe M."/>
            <person name="Pfeiffer B.D."/>
            <person name="Wan K.H."/>
            <person name="Doyle C."/>
            <person name="Baxter E.G."/>
            <person name="Helt G."/>
            <person name="Nelson C.R."/>
            <person name="Miklos G.L.G."/>
            <person name="Abril J.F."/>
            <person name="Agbayani A."/>
            <person name="An H.-J."/>
            <person name="Andrews-Pfannkoch C."/>
            <person name="Baldwin D."/>
            <person name="Ballew R.M."/>
            <person name="Basu A."/>
            <person name="Baxendale J."/>
            <person name="Bayraktaroglu L."/>
            <person name="Beasley E.M."/>
            <person name="Beeson K.Y."/>
            <person name="Benos P.V."/>
            <person name="Berman B.P."/>
            <person name="Bhandari D."/>
            <person name="Bolshakov S."/>
            <person name="Borkova D."/>
            <person name="Botchan M.R."/>
            <person name="Bouck J."/>
            <person name="Brokstein P."/>
            <person name="Brottier P."/>
            <person name="Burtis K.C."/>
            <person name="Busam D.A."/>
            <person name="Butler H."/>
            <person name="Cadieu E."/>
            <person name="Center A."/>
            <person name="Chandra I."/>
            <person name="Cherry J.M."/>
            <person name="Cawley S."/>
            <person name="Dahlke C."/>
            <person name="Davenport L.B."/>
            <person name="Davies P."/>
            <person name="de Pablos B."/>
            <person name="Delcher A."/>
            <person name="Deng Z."/>
            <person name="Mays A.D."/>
            <person name="Dew I."/>
            <person name="Dietz S.M."/>
            <person name="Dodson K."/>
            <person name="Doup L.E."/>
            <person name="Downes M."/>
            <person name="Dugan-Rocha S."/>
            <person name="Dunkov B.C."/>
            <person name="Dunn P."/>
            <person name="Durbin K.J."/>
            <person name="Evangelista C.C."/>
            <person name="Ferraz C."/>
            <person name="Ferriera S."/>
            <person name="Fleischmann W."/>
            <person name="Fosler C."/>
            <person name="Gabrielian A.E."/>
            <person name="Garg N.S."/>
            <person name="Gelbart W.M."/>
            <person name="Glasser K."/>
            <person name="Glodek A."/>
            <person name="Gong F."/>
            <person name="Gorrell J.H."/>
            <person name="Gu Z."/>
            <person name="Guan P."/>
            <person name="Harris M."/>
            <person name="Harris N.L."/>
            <person name="Harvey D.A."/>
            <person name="Heiman T.J."/>
            <person name="Hernandez J.R."/>
            <person name="Houck J."/>
            <person name="Hostin D."/>
            <person name="Houston K.A."/>
            <person name="Howland T.J."/>
            <person name="Wei M.-H."/>
            <person name="Ibegwam C."/>
            <person name="Jalali M."/>
            <person name="Kalush F."/>
            <person name="Karpen G.H."/>
            <person name="Ke Z."/>
            <person name="Kennison J.A."/>
            <person name="Ketchum K.A."/>
            <person name="Kimmel B.E."/>
            <person name="Kodira C.D."/>
            <person name="Kraft C.L."/>
            <person name="Kravitz S."/>
            <person name="Kulp D."/>
            <person name="Lai Z."/>
            <person name="Lasko P."/>
            <person name="Lei Y."/>
            <person name="Levitsky A.A."/>
            <person name="Li J.H."/>
            <person name="Li Z."/>
            <person name="Liang Y."/>
            <person name="Lin X."/>
            <person name="Liu X."/>
            <person name="Mattei B."/>
            <person name="McIntosh T.C."/>
            <person name="McLeod M.P."/>
            <person name="McPherson D."/>
            <person name="Merkulov G."/>
            <person name="Milshina N.V."/>
            <person name="Mobarry C."/>
            <person name="Morris J."/>
            <person name="Moshrefi A."/>
            <person name="Mount S.M."/>
            <person name="Moy M."/>
            <person name="Murphy B."/>
            <person name="Murphy L."/>
            <person name="Muzny D.M."/>
            <person name="Nelson D.L."/>
            <person name="Nelson D.R."/>
            <person name="Nelson K.A."/>
            <person name="Nixon K."/>
            <person name="Nusskern D.R."/>
            <person name="Pacleb J.M."/>
            <person name="Palazzolo M."/>
            <person name="Pittman G.S."/>
            <person name="Pan S."/>
            <person name="Pollard J."/>
            <person name="Puri V."/>
            <person name="Reese M.G."/>
            <person name="Reinert K."/>
            <person name="Remington K."/>
            <person name="Saunders R.D.C."/>
            <person name="Scheeler F."/>
            <person name="Shen H."/>
            <person name="Shue B.C."/>
            <person name="Siden-Kiamos I."/>
            <person name="Simpson M."/>
            <person name="Skupski M.P."/>
            <person name="Smith T.J."/>
            <person name="Spier E."/>
            <person name="Spradling A.C."/>
            <person name="Stapleton M."/>
            <person name="Strong R."/>
            <person name="Sun E."/>
            <person name="Svirskas R."/>
            <person name="Tector C."/>
            <person name="Turner R."/>
            <person name="Venter E."/>
            <person name="Wang A.H."/>
            <person name="Wang X."/>
            <person name="Wang Z.-Y."/>
            <person name="Wassarman D.A."/>
            <person name="Weinstock G.M."/>
            <person name="Weissenbach J."/>
            <person name="Williams S.M."/>
            <person name="Woodage T."/>
            <person name="Worley K.C."/>
            <person name="Wu D."/>
            <person name="Yang S."/>
            <person name="Yao Q.A."/>
            <person name="Ye J."/>
            <person name="Yeh R.-F."/>
            <person name="Zaveri J.S."/>
            <person name="Zhan M."/>
            <person name="Zhang G."/>
            <person name="Zhao Q."/>
            <person name="Zheng L."/>
            <person name="Zheng X.H."/>
            <person name="Zhong F.N."/>
            <person name="Zhong W."/>
            <person name="Zhou X."/>
            <person name="Zhu S.C."/>
            <person name="Zhu X."/>
            <person name="Smith H.O."/>
            <person name="Gibbs R.A."/>
            <person name="Myers E.W."/>
            <person name="Rubin G.M."/>
            <person name="Venter J.C."/>
        </authorList>
    </citation>
    <scope>NUCLEOTIDE SEQUENCE [LARGE SCALE GENOMIC DNA]</scope>
    <source>
        <strain>Berkeley</strain>
    </source>
</reference>
<reference key="3">
    <citation type="journal article" date="2002" name="Genome Biol.">
        <title>Annotation of the Drosophila melanogaster euchromatic genome: a systematic review.</title>
        <authorList>
            <person name="Misra S."/>
            <person name="Crosby M.A."/>
            <person name="Mungall C.J."/>
            <person name="Matthews B.B."/>
            <person name="Campbell K.S."/>
            <person name="Hradecky P."/>
            <person name="Huang Y."/>
            <person name="Kaminker J.S."/>
            <person name="Millburn G.H."/>
            <person name="Prochnik S.E."/>
            <person name="Smith C.D."/>
            <person name="Tupy J.L."/>
            <person name="Whitfield E.J."/>
            <person name="Bayraktaroglu L."/>
            <person name="Berman B.P."/>
            <person name="Bettencourt B.R."/>
            <person name="Celniker S.E."/>
            <person name="de Grey A.D.N.J."/>
            <person name="Drysdale R.A."/>
            <person name="Harris N.L."/>
            <person name="Richter J."/>
            <person name="Russo S."/>
            <person name="Schroeder A.J."/>
            <person name="Shu S.Q."/>
            <person name="Stapleton M."/>
            <person name="Yamada C."/>
            <person name="Ashburner M."/>
            <person name="Gelbart W.M."/>
            <person name="Rubin G.M."/>
            <person name="Lewis S.E."/>
        </authorList>
    </citation>
    <scope>GENOME REANNOTATION</scope>
    <source>
        <strain>Berkeley</strain>
    </source>
</reference>
<reference key="4">
    <citation type="submission" date="2003-01" db="EMBL/GenBank/DDBJ databases">
        <authorList>
            <person name="Stapleton M."/>
            <person name="Brokstein P."/>
            <person name="Hong L."/>
            <person name="Agbayani A."/>
            <person name="Carlson J.W."/>
            <person name="Champe M."/>
            <person name="Chavez C."/>
            <person name="Dorsett V."/>
            <person name="Dresnek D."/>
            <person name="Farfan D."/>
            <person name="Frise E."/>
            <person name="George R.A."/>
            <person name="Gonzalez M."/>
            <person name="Guarin H."/>
            <person name="Kronmiller B."/>
            <person name="Li P.W."/>
            <person name="Liao G."/>
            <person name="Miranda A."/>
            <person name="Mungall C.J."/>
            <person name="Nunoo J."/>
            <person name="Pacleb J.M."/>
            <person name="Paragas V."/>
            <person name="Park S."/>
            <person name="Patel S."/>
            <person name="Phouanenavong S."/>
            <person name="Wan K.H."/>
            <person name="Yu C."/>
            <person name="Lewis S.E."/>
            <person name="Rubin G.M."/>
            <person name="Celniker S.E."/>
        </authorList>
    </citation>
    <scope>NUCLEOTIDE SEQUENCE [LARGE SCALE MRNA] (ISOFORM B3)</scope>
    <source>
        <strain>Berkeley</strain>
        <tissue>Embryo</tissue>
    </source>
</reference>
<reference key="5">
    <citation type="journal article" date="2007" name="Mol. Biosyst.">
        <title>An integrated chemical, mass spectrometric and computational strategy for (quantitative) phosphoproteomics: application to Drosophila melanogaster Kc167 cells.</title>
        <authorList>
            <person name="Bodenmiller B."/>
            <person name="Mueller L.N."/>
            <person name="Pedrioli P.G.A."/>
            <person name="Pflieger D."/>
            <person name="Juenger M.A."/>
            <person name="Eng J.K."/>
            <person name="Aebersold R."/>
            <person name="Tao W.A."/>
        </authorList>
    </citation>
    <scope>PHOSPHORYLATION [LARGE SCALE ANALYSIS] AT SER-354; THR-721; SER-728; SER-1075 AND SER-1121</scope>
    <scope>IDENTIFICATION BY MASS SPECTROMETRY</scope>
</reference>
<reference key="6">
    <citation type="journal article" date="2008" name="J. Proteome Res.">
        <title>Phosphoproteome analysis of Drosophila melanogaster embryos.</title>
        <authorList>
            <person name="Zhai B."/>
            <person name="Villen J."/>
            <person name="Beausoleil S.A."/>
            <person name="Mintseris J."/>
            <person name="Gygi S.P."/>
        </authorList>
    </citation>
    <scope>PHOSPHORYLATION [LARGE SCALE ANALYSIS] AT SER-448; TYR-450; SER-709; SER-710; SER-712; SER-874 AND SER-1086</scope>
    <scope>IDENTIFICATION BY MASS SPECTROMETRY</scope>
    <source>
        <tissue>Embryo</tissue>
    </source>
</reference>
<organism>
    <name type="scientific">Drosophila melanogaster</name>
    <name type="common">Fruit fly</name>
    <dbReference type="NCBI Taxonomy" id="7227"/>
    <lineage>
        <taxon>Eukaryota</taxon>
        <taxon>Metazoa</taxon>
        <taxon>Ecdysozoa</taxon>
        <taxon>Arthropoda</taxon>
        <taxon>Hexapoda</taxon>
        <taxon>Insecta</taxon>
        <taxon>Pterygota</taxon>
        <taxon>Neoptera</taxon>
        <taxon>Endopterygota</taxon>
        <taxon>Diptera</taxon>
        <taxon>Brachycera</taxon>
        <taxon>Muscomorpha</taxon>
        <taxon>Ephydroidea</taxon>
        <taxon>Drosophilidae</taxon>
        <taxon>Drosophila</taxon>
        <taxon>Sophophora</taxon>
    </lineage>
</organism>
<dbReference type="EMBL" id="X54061">
    <property type="protein sequence ID" value="CAA37996.1"/>
    <property type="molecule type" value="mRNA"/>
</dbReference>
<dbReference type="EMBL" id="AE014297">
    <property type="protein sequence ID" value="AAF57214.1"/>
    <property type="molecule type" value="Genomic_DNA"/>
</dbReference>
<dbReference type="EMBL" id="BT003276">
    <property type="protein sequence ID" value="AAO25033.1"/>
    <property type="molecule type" value="mRNA"/>
</dbReference>
<dbReference type="PIR" id="A36685">
    <property type="entry name" value="A36685"/>
</dbReference>
<dbReference type="RefSeq" id="NP_001263154.1">
    <molecule id="P23226-2"/>
    <property type="nucleotide sequence ID" value="NM_001276225.1"/>
</dbReference>
<dbReference type="RefSeq" id="NP_524615.1">
    <molecule id="P23226-3"/>
    <property type="nucleotide sequence ID" value="NM_079876.3"/>
</dbReference>
<dbReference type="PDB" id="4J7B">
    <property type="method" value="X-ray"/>
    <property type="resolution" value="2.30 A"/>
    <property type="chains" value="C/F=276-325"/>
</dbReference>
<dbReference type="PDBsum" id="4J7B"/>
<dbReference type="SMR" id="P23226"/>
<dbReference type="BioGRID" id="68603">
    <property type="interactions" value="19"/>
</dbReference>
<dbReference type="DIP" id="DIP-60545N"/>
<dbReference type="ELM" id="P23226"/>
<dbReference type="FunCoup" id="P23226">
    <property type="interactions" value="59"/>
</dbReference>
<dbReference type="IntAct" id="P23226">
    <property type="interactions" value="101"/>
</dbReference>
<dbReference type="STRING" id="7227.FBpp0085235"/>
<dbReference type="GlyGen" id="P23226">
    <property type="glycosylation" value="3 sites, 1 O-linked glycan (2 sites)"/>
</dbReference>
<dbReference type="iPTMnet" id="P23226"/>
<dbReference type="PaxDb" id="7227-FBpp0085235"/>
<dbReference type="PeptideAtlas" id="P23226"/>
<dbReference type="DNASU" id="43765"/>
<dbReference type="EnsemblMetazoa" id="FBtr0085875">
    <molecule id="P23226-3"/>
    <property type="protein sequence ID" value="FBpp0085234"/>
    <property type="gene ID" value="FBgn0002645"/>
</dbReference>
<dbReference type="EnsemblMetazoa" id="FBtr0334299">
    <molecule id="P23226-2"/>
    <property type="protein sequence ID" value="FBpp0306414"/>
    <property type="gene ID" value="FBgn0002645"/>
</dbReference>
<dbReference type="GeneID" id="43765"/>
<dbReference type="KEGG" id="dme:Dmel_CG1483"/>
<dbReference type="AGR" id="FB:FBgn0002645"/>
<dbReference type="CTD" id="43765"/>
<dbReference type="FlyBase" id="FBgn0002645">
    <property type="gene designation" value="Map205"/>
</dbReference>
<dbReference type="VEuPathDB" id="VectorBase:FBgn0002645"/>
<dbReference type="eggNOG" id="ENOG502SE79">
    <property type="taxonomic scope" value="Eukaryota"/>
</dbReference>
<dbReference type="InParanoid" id="P23226"/>
<dbReference type="OrthoDB" id="8060570at2759"/>
<dbReference type="SignaLink" id="P23226"/>
<dbReference type="BioGRID-ORCS" id="43765">
    <property type="hits" value="0 hits in 1 CRISPR screen"/>
</dbReference>
<dbReference type="EvolutionaryTrace" id="P23226"/>
<dbReference type="GenomeRNAi" id="43765"/>
<dbReference type="PRO" id="PR:P23226"/>
<dbReference type="Proteomes" id="UP000000803">
    <property type="component" value="Chromosome 3R"/>
</dbReference>
<dbReference type="Bgee" id="FBgn0002645">
    <property type="expression patterns" value="Expressed in distal medullary amacrine neuron Dm11 in insect head and 261 other cell types or tissues"/>
</dbReference>
<dbReference type="ExpressionAtlas" id="P23226">
    <property type="expression patterns" value="baseline and differential"/>
</dbReference>
<dbReference type="GO" id="GO:0005737">
    <property type="term" value="C:cytoplasm"/>
    <property type="evidence" value="ECO:0007669"/>
    <property type="project" value="UniProtKB-KW"/>
</dbReference>
<dbReference type="GO" id="GO:0005874">
    <property type="term" value="C:microtubule"/>
    <property type="evidence" value="ECO:0007669"/>
    <property type="project" value="UniProtKB-KW"/>
</dbReference>
<dbReference type="GO" id="GO:0005875">
    <property type="term" value="C:microtubule associated complex"/>
    <property type="evidence" value="ECO:0000314"/>
    <property type="project" value="FlyBase"/>
</dbReference>
<dbReference type="GO" id="GO:0030496">
    <property type="term" value="C:midbody"/>
    <property type="evidence" value="ECO:0000314"/>
    <property type="project" value="FlyBase"/>
</dbReference>
<dbReference type="GO" id="GO:0005819">
    <property type="term" value="C:spindle"/>
    <property type="evidence" value="ECO:0000314"/>
    <property type="project" value="FlyBase"/>
</dbReference>
<dbReference type="GO" id="GO:0007098">
    <property type="term" value="P:centrosome cycle"/>
    <property type="evidence" value="ECO:0000315"/>
    <property type="project" value="FlyBase"/>
</dbReference>
<dbReference type="GO" id="GO:0000278">
    <property type="term" value="P:mitotic cell cycle"/>
    <property type="evidence" value="ECO:0000315"/>
    <property type="project" value="FlyBase"/>
</dbReference>
<sequence length="1185" mass="126669">MEHHEDNAQLDNYLQNRLAESLQICGGAGEHNPHLADATGGNGCAPGIAPSKSDEVDGEEDEEWKYIHEVRQSEKLQQEKLPLTKETGNGFGPGRDSDNQVHGNGAAAVFNLYEEDVEVIKNDGDFSTNSNTTTSTDEVVARQAQEPNQLPEQLQQQQQIESQGVHEDPRQEDEDEHSSVATTYGTSSLSENNSSPLDQEEVVMVAQTVGQEQLVDFDNKENSYFVKNLEENHSQLNPNAVAFVPGVGSQSSSPLPAAEDPLPGVQPRPFLPGGTLDDLVAESPRKEFARINMDGIAVPDEREFDIEADMRPHELEQESDTFGAGHLEMQLLNGIGTADQAALRDVLDHGPETSVDMELPLDQVPNDADIMKQSIYAEHNSSIEDILNSVQPLPIQTCDDKELIHVEEKEHVSKSPSTEELQFQSDFPNNQESHTLFNNTEQDPMQASFYLEHTSQKAQEGCQEQMQLPAECSDIFADQSLLLDTSAPQLSSEADSPVAKLELESQQAGIVDITPSPLSSTAEKHLVEDTKELVEEYTLDPESHFFGVVSSQAPLQLFGKHTLPSIIHSCKHRVASEQNDEENAVFESVSGYETQNFDEISSPPEGINPFAQPFTPAHLVIEQANTMMEDVGGMPIPASEDFAICDKVASKSSNEVEDHRSEQQAFVKEELLHPVGDVVAQVENLGTEKNFVVEEERLPISVSDEIPLSSASKEKLLPDTTDEQLLTSALEEKLRSVAPEESVSTAADGQSISQFDEYVIASNKPLEDILEPEKDVEVAKSLSEKTSVATVAGGAVVGATKTHSATKAGSTAASAKSKTETLVMKKTTASSTSVYGANKSAAPRPSTARLGIKSTSIATKTSTTSSLTGNPRKSLSSNVGSTVKPPTKLSGTRPATAPVSKVTLGAKTITNKPTASGTASDNVTRTTLRPLVSTNARRPATSGTGSVASSTARRPVTNAKGSAPGSAASTKVRPAATMTAPVKPKVLSPRSTISSTTTVRKVPSTSTPSFSTRSPNKQQSNGLGKNTSSTTTSTATATITKSFTARSAPKFTHSASLTYNNGSTSRRLLVPGSSSTTTTSSLRKSSPLKAAPGKAASKPLTPQSKDGTAKSSPAVLKARNSTLMGGEGVAPSNECVPTPNGQINAEEVVKLKGKGLAEEVKIIEEQKLHEQDVPAHNAEVPLLDF</sequence>